<keyword id="KW-0150">Chloroplast</keyword>
<keyword id="KW-0472">Membrane</keyword>
<keyword id="KW-0520">NAD</keyword>
<keyword id="KW-0521">NADP</keyword>
<keyword id="KW-0934">Plastid</keyword>
<keyword id="KW-0618">Plastoquinone</keyword>
<keyword id="KW-0874">Quinone</keyword>
<keyword id="KW-1185">Reference proteome</keyword>
<keyword id="KW-0793">Thylakoid</keyword>
<keyword id="KW-1278">Translocase</keyword>
<keyword id="KW-0812">Transmembrane</keyword>
<keyword id="KW-1133">Transmembrane helix</keyword>
<keyword id="KW-0813">Transport</keyword>
<sequence length="176" mass="19461">MDLPGPIHEILMLFGGFVLLLGGLGVVLLTNPIYSAFSLGLVLVCISLFYFLLNSYFVAVAQLLIYVGAINVLIIFAVMFVNGSEWSKDKNYWTIGDGFTSLVCITIVFSLMTTIPDTSWYGILWTTRSNQIVEQGLINNVQQIGIHLATDFYLPFELISIILLVSLIGAITMARQ</sequence>
<dbReference type="EC" id="7.1.1.-"/>
<dbReference type="EMBL" id="AB042240">
    <property type="protein sequence ID" value="BAB47088.1"/>
    <property type="molecule type" value="Genomic_DNA"/>
</dbReference>
<dbReference type="RefSeq" id="NP_114311.1">
    <property type="nucleotide sequence ID" value="NC_002762.1"/>
</dbReference>
<dbReference type="SMR" id="Q95H44"/>
<dbReference type="STRING" id="4565.Q95H44"/>
<dbReference type="PaxDb" id="4565-EPlTAEP00000010040"/>
<dbReference type="EnsemblPlants" id="TraesARI7B03G04256870.1">
    <property type="protein sequence ID" value="TraesARI7B03G04256870.1.CDS1"/>
    <property type="gene ID" value="TraesARI7B03G04256870"/>
</dbReference>
<dbReference type="EnsemblPlants" id="TraesCS2D02G079300.1">
    <property type="protein sequence ID" value="TraesCS2D02G079300.1"/>
    <property type="gene ID" value="TraesCS2D02G079300"/>
</dbReference>
<dbReference type="EnsemblPlants" id="TraesCS2D02G557200.1">
    <property type="protein sequence ID" value="TraesCS2D02G557200.1.cds1"/>
    <property type="gene ID" value="TraesCS2D02G557200"/>
</dbReference>
<dbReference type="EnsemblPlants" id="TraesCS2D03G0156200.1">
    <property type="protein sequence ID" value="TraesCS2D03G0156200.1.CDS"/>
    <property type="gene ID" value="TraesCS2D03G0156200"/>
</dbReference>
<dbReference type="EnsemblPlants" id="TraesCS2D03G1241400.1">
    <property type="protein sequence ID" value="TraesCS2D03G1241400.1.CDS1"/>
    <property type="gene ID" value="TraesCS2D03G1241400"/>
</dbReference>
<dbReference type="EnsemblPlants" id="TraesJAG1B03G00216680.1">
    <property type="protein sequence ID" value="TraesJAG1B03G00216680.1.CDS1"/>
    <property type="gene ID" value="TraesJAG1B03G00216680"/>
</dbReference>
<dbReference type="EnsemblPlants" id="TraesJUL1B03G00215670.1">
    <property type="protein sequence ID" value="TraesJUL1B03G00215670.1.CDS1"/>
    <property type="gene ID" value="TraesJUL1B03G00215670"/>
</dbReference>
<dbReference type="EnsemblPlants" id="TraesJUL2D03G01304920.1">
    <property type="protein sequence ID" value="TraesJUL2D03G01304920.1.CDS1"/>
    <property type="gene ID" value="TraesJUL2D03G01304920"/>
</dbReference>
<dbReference type="EnsemblPlants" id="TraesKAR1B01G0064330.1">
    <property type="protein sequence ID" value="cds.TraesKAR1B01G0064330.1"/>
    <property type="gene ID" value="TraesKAR1B01G0064330"/>
</dbReference>
<dbReference type="EnsemblPlants" id="TraesKAR2D01G0459090.1">
    <property type="protein sequence ID" value="cds.TraesKAR2D01G0459090.1"/>
    <property type="gene ID" value="TraesKAR2D01G0459090"/>
</dbReference>
<dbReference type="EnsemblPlants" id="TraesKAR4A01G0000300.1">
    <property type="protein sequence ID" value="cds.TraesKAR4A01G0000300.1"/>
    <property type="gene ID" value="TraesKAR4A01G0000300"/>
</dbReference>
<dbReference type="EnsemblPlants" id="TraesKAR6B01G0219100.1">
    <property type="protein sequence ID" value="cds.TraesKAR6B01G0219100.1"/>
    <property type="gene ID" value="TraesKAR6B01G0219100"/>
</dbReference>
<dbReference type="EnsemblPlants" id="TraesKAR6B01G0219980.1">
    <property type="protein sequence ID" value="cds.TraesKAR6B01G0219980.1"/>
    <property type="gene ID" value="TraesKAR6B01G0219980"/>
</dbReference>
<dbReference type="EnsemblPlants" id="TraesKARUn01G0026300.1">
    <property type="protein sequence ID" value="cds.TraesKARUn01G0026300.1"/>
    <property type="gene ID" value="TraesKARUn01G0026300"/>
</dbReference>
<dbReference type="EnsemblPlants" id="TraesKARUn01G0027200.1">
    <property type="protein sequence ID" value="cds.TraesKARUn01G0027200.1"/>
    <property type="gene ID" value="TraesKARUn01G0027200"/>
</dbReference>
<dbReference type="EnsemblPlants" id="TraesKARUn01G0028950.1">
    <property type="protein sequence ID" value="cds.TraesKARUn01G0028950.1"/>
    <property type="gene ID" value="TraesKARUn01G0028950"/>
</dbReference>
<dbReference type="EnsemblPlants" id="TraesKARUn01G0032570.1">
    <property type="protein sequence ID" value="cds.TraesKARUn01G0032570.1"/>
    <property type="gene ID" value="TraesKARUn01G0032570"/>
</dbReference>
<dbReference type="EnsemblPlants" id="TraesKARUn01G0034040.1">
    <property type="protein sequence ID" value="cds.TraesKARUn01G0034040.1"/>
    <property type="gene ID" value="TraesKARUn01G0034040"/>
</dbReference>
<dbReference type="EnsemblPlants" id="TraesKARUn01G0035070.1">
    <property type="protein sequence ID" value="cds.TraesKARUn01G0035070.1"/>
    <property type="gene ID" value="TraesKARUn01G0035070"/>
</dbReference>
<dbReference type="EnsemblPlants" id="TraesKARUn01G0035620.1">
    <property type="protein sequence ID" value="cds.TraesKARUn01G0035620.1"/>
    <property type="gene ID" value="TraesKARUn01G0035620"/>
</dbReference>
<dbReference type="EnsemblPlants" id="TraesKARUn01G0035920.1">
    <property type="protein sequence ID" value="cds.TraesKARUn01G0035920.1"/>
    <property type="gene ID" value="TraesKARUn01G0035920"/>
</dbReference>
<dbReference type="EnsemblPlants" id="TraesKARUn01G0036030.1">
    <property type="protein sequence ID" value="cds.TraesKARUn01G0036030.1"/>
    <property type="gene ID" value="TraesKARUn01G0036030"/>
</dbReference>
<dbReference type="EnsemblPlants" id="TraesKARUn01G0036160.1">
    <property type="protein sequence ID" value="cds.TraesKARUn01G0036160.1"/>
    <property type="gene ID" value="TraesKARUn01G0036160"/>
</dbReference>
<dbReference type="EnsemblPlants" id="TraesKARUn01G0076180.1">
    <property type="protein sequence ID" value="cds.TraesKARUn01G0076180.1"/>
    <property type="gene ID" value="TraesKARUn01G0076180"/>
</dbReference>
<dbReference type="EnsemblPlants" id="TraesKARUn01G0076380.1">
    <property type="protein sequence ID" value="cds.TraesKARUn01G0076380.1"/>
    <property type="gene ID" value="TraesKARUn01G0076380"/>
</dbReference>
<dbReference type="EnsemblPlants" id="TraesKARUn01G0076590.1">
    <property type="protein sequence ID" value="cds.TraesKARUn01G0076590.1"/>
    <property type="gene ID" value="TraesKARUn01G0076590"/>
</dbReference>
<dbReference type="EnsemblPlants" id="TraesKARUn01G0076820.1">
    <property type="protein sequence ID" value="cds.TraesKARUn01G0076820.1"/>
    <property type="gene ID" value="TraesKARUn01G0076820"/>
</dbReference>
<dbReference type="EnsemblPlants" id="TraesKARUn01G0101420.1">
    <property type="protein sequence ID" value="cds.TraesKARUn01G0101420.1"/>
    <property type="gene ID" value="TraesKARUn01G0101420"/>
</dbReference>
<dbReference type="EnsemblPlants" id="TraesKARUn01G0129100.1">
    <property type="protein sequence ID" value="cds.TraesKARUn01G0129100.1"/>
    <property type="gene ID" value="TraesKARUn01G0129100"/>
</dbReference>
<dbReference type="EnsemblPlants" id="TraesKARUn01G0150150.1">
    <property type="protein sequence ID" value="cds.TraesKARUn01G0150150.1"/>
    <property type="gene ID" value="TraesKARUn01G0150150"/>
</dbReference>
<dbReference type="EnsemblPlants" id="TraesKARUn01G0150420.1">
    <property type="protein sequence ID" value="cds.TraesKARUn01G0150420.1"/>
    <property type="gene ID" value="TraesKARUn01G0150420"/>
</dbReference>
<dbReference type="EnsemblPlants" id="TraesKARUn01G0150780.1">
    <property type="protein sequence ID" value="cds.TraesKARUn01G0150780.1"/>
    <property type="gene ID" value="TraesKARUn01G0150780"/>
</dbReference>
<dbReference type="EnsemblPlants" id="TraesKARUn01G0150900.1">
    <property type="protein sequence ID" value="cds.TraesKARUn01G0150900.1"/>
    <property type="gene ID" value="TraesKARUn01G0150900"/>
</dbReference>
<dbReference type="EnsemblPlants" id="TraesKARUn01G0154660.1">
    <property type="protein sequence ID" value="cds.TraesKARUn01G0154660.1"/>
    <property type="gene ID" value="TraesKARUn01G0154660"/>
</dbReference>
<dbReference type="EnsemblPlants" id="TraesKARUn01G0168460.1">
    <property type="protein sequence ID" value="cds.TraesKARUn01G0168460.1"/>
    <property type="gene ID" value="TraesKARUn01G0168460"/>
</dbReference>
<dbReference type="EnsemblPlants" id="TraesKARUn01G0172490.1">
    <property type="protein sequence ID" value="cds.TraesKARUn01G0172490.1"/>
    <property type="gene ID" value="TraesKARUn01G0172490"/>
</dbReference>
<dbReference type="EnsemblPlants" id="TraesKARUn01G0178090.1">
    <property type="protein sequence ID" value="cds.TraesKARUn01G0178090.1"/>
    <property type="gene ID" value="TraesKARUn01G0178090"/>
</dbReference>
<dbReference type="EnsemblPlants" id="TraesKARUn01G0178160.1">
    <property type="protein sequence ID" value="cds.TraesKARUn01G0178160.1"/>
    <property type="gene ID" value="TraesKARUn01G0178160"/>
</dbReference>
<dbReference type="EnsemblPlants" id="TraesKARUn01G0178690.1">
    <property type="protein sequence ID" value="cds.TraesKARUn01G0178690.1"/>
    <property type="gene ID" value="TraesKARUn01G0178690"/>
</dbReference>
<dbReference type="EnsemblPlants" id="TraesKARUn01G0185650.1">
    <property type="protein sequence ID" value="cds.TraesKARUn01G0185650.1"/>
    <property type="gene ID" value="TraesKARUn01G0185650"/>
</dbReference>
<dbReference type="EnsemblPlants" id="TraesKARUn01G0188070.1">
    <property type="protein sequence ID" value="cds.TraesKARUn01G0188070.1"/>
    <property type="gene ID" value="TraesKARUn01G0188070"/>
</dbReference>
<dbReference type="EnsemblPlants" id="TraesKARUn01G0188810.1">
    <property type="protein sequence ID" value="cds.TraesKARUn01G0188810.1"/>
    <property type="gene ID" value="TraesKARUn01G0188810"/>
</dbReference>
<dbReference type="EnsemblPlants" id="TraesLAC2D03G01055000.1">
    <property type="protein sequence ID" value="TraesLAC2D03G01055000.1.CDS1"/>
    <property type="gene ID" value="TraesLAC2D03G01055000"/>
</dbReference>
<dbReference type="EnsemblPlants" id="TraesLDM2D03G01293920.1">
    <property type="protein sequence ID" value="TraesLDM2D03G01293920.1.CDS1"/>
    <property type="gene ID" value="TraesLDM2D03G01293920"/>
</dbReference>
<dbReference type="EnsemblPlants" id="TraesMAC2D03G01291390.1">
    <property type="protein sequence ID" value="TraesMAC2D03G01291390.1.CDS1"/>
    <property type="gene ID" value="TraesMAC2D03G01291390"/>
</dbReference>
<dbReference type="EnsemblPlants" id="TraesMAC2D03G01301980.1">
    <property type="protein sequence ID" value="TraesMAC2D03G01301980.1.CDS1"/>
    <property type="gene ID" value="TraesMAC2D03G01301980"/>
</dbReference>
<dbReference type="EnsemblPlants" id="TraesPARA_EIv1.0_0758570.1">
    <property type="protein sequence ID" value="TraesPARA_EIv1.0_0758570.1.CDS1"/>
    <property type="gene ID" value="TraesPARA_EIv1.0_0758570"/>
</dbReference>
<dbReference type="EnsemblPlants" id="TraesPARA_EIv1.0_2014390.1">
    <property type="protein sequence ID" value="TraesPARA_EIv1.0_2014390.1.CDS1"/>
    <property type="gene ID" value="TraesPARA_EIv1.0_2014390"/>
</dbReference>
<dbReference type="EnsemblPlants" id="TraesPARA_EIv1.0_2054710.1">
    <property type="protein sequence ID" value="TraesPARA_EIv1.0_2054710.1.CDS1"/>
    <property type="gene ID" value="TraesPARA_EIv1.0_2054710"/>
</dbReference>
<dbReference type="EnsemblPlants" id="TraesPARA_EIv1.0_2055280.1">
    <property type="protein sequence ID" value="TraesPARA_EIv1.0_2055280.1.CDS1"/>
    <property type="gene ID" value="TraesPARA_EIv1.0_2055280"/>
</dbReference>
<dbReference type="EnsemblPlants" id="TraesPARA_EIv1.0_2648810.1">
    <property type="protein sequence ID" value="TraesPARA_EIv1.0_2648810.1.CDS1"/>
    <property type="gene ID" value="TraesPARA_EIv1.0_2648810"/>
</dbReference>
<dbReference type="EnsemblPlants" id="TraesPARA_EIv1.0_2649280.1">
    <property type="protein sequence ID" value="TraesPARA_EIv1.0_2649280.1.CDS1"/>
    <property type="gene ID" value="TraesPARA_EIv1.0_2649280"/>
</dbReference>
<dbReference type="EnsemblPlants" id="TraesPARA_EIv1.0_2650680.1">
    <property type="protein sequence ID" value="TraesPARA_EIv1.0_2650680.1.CDS1"/>
    <property type="gene ID" value="TraesPARA_EIv1.0_2650680"/>
</dbReference>
<dbReference type="EnsemblPlants" id="TraesPARA_EIv1.0_2674340.1">
    <property type="protein sequence ID" value="TraesPARA_EIv1.0_2674340.1.CDS1"/>
    <property type="gene ID" value="TraesPARA_EIv1.0_2674340"/>
</dbReference>
<dbReference type="EnsemblPlants" id="TraesPARA_EIv1.0_2676400.1">
    <property type="protein sequence ID" value="TraesPARA_EIv1.0_2676400.1.CDS1"/>
    <property type="gene ID" value="TraesPARA_EIv1.0_2676400"/>
</dbReference>
<dbReference type="EnsemblPlants" id="TraesPARA_EIv1.0_2677400.1">
    <property type="protein sequence ID" value="TraesPARA_EIv1.0_2677400.1.CDS1"/>
    <property type="gene ID" value="TraesPARA_EIv1.0_2677400"/>
</dbReference>
<dbReference type="EnsemblPlants" id="TraesPARA_EIv1.0_2677640.1">
    <property type="protein sequence ID" value="TraesPARA_EIv1.0_2677640.1.CDS1"/>
    <property type="gene ID" value="TraesPARA_EIv1.0_2677640"/>
</dbReference>
<dbReference type="EnsemblPlants" id="TraesPARA_EIv1.0_2678830.1">
    <property type="protein sequence ID" value="TraesPARA_EIv1.0_2678830.1.CDS1"/>
    <property type="gene ID" value="TraesPARA_EIv1.0_2678830"/>
</dbReference>
<dbReference type="EnsemblPlants" id="TraesPARA_EIv1.0_2679970.1">
    <property type="protein sequence ID" value="TraesPARA_EIv1.0_2679970.1.CDS1"/>
    <property type="gene ID" value="TraesPARA_EIv1.0_2679970"/>
</dbReference>
<dbReference type="EnsemblPlants" id="TraesPARA_EIv1.0_2681290.1">
    <property type="protein sequence ID" value="TraesPARA_EIv1.0_2681290.1.CDS1"/>
    <property type="gene ID" value="TraesPARA_EIv1.0_2681290"/>
</dbReference>
<dbReference type="EnsemblPlants" id="TraesPARA_EIv1.0_2681380.1">
    <property type="protein sequence ID" value="TraesPARA_EIv1.0_2681380.1.CDS1"/>
    <property type="gene ID" value="TraesPARA_EIv1.0_2681380"/>
</dbReference>
<dbReference type="EnsemblPlants" id="TraesRN2D0100173600.1">
    <property type="protein sequence ID" value="TraesRN2D0100173600.1"/>
    <property type="gene ID" value="TraesRN2D0100173600"/>
</dbReference>
<dbReference type="EnsemblPlants" id="TraesRN2D0101218100.1">
    <property type="protein sequence ID" value="TraesRN2D0101218100.1"/>
    <property type="gene ID" value="TraesRN2D0101218100"/>
</dbReference>
<dbReference type="EnsemblPlants" id="TraesRN3A0101018600.1">
    <property type="protein sequence ID" value="TraesRN3A0101018600.1"/>
    <property type="gene ID" value="TraesRN3A0101018600"/>
</dbReference>
<dbReference type="EnsemblPlants" id="TraesRN3B0100445200.1">
    <property type="protein sequence ID" value="TraesRN3B0100445200.1"/>
    <property type="gene ID" value="TraesRN3B0100445200"/>
</dbReference>
<dbReference type="EnsemblPlants" id="TraesSTA2D03G01281930.1">
    <property type="protein sequence ID" value="TraesSTA2D03G01281930.1.CDS1"/>
    <property type="gene ID" value="TraesSTA2D03G01281930"/>
</dbReference>
<dbReference type="EnsemblPlants" id="TraesSTA3B03G01599560.1">
    <property type="protein sequence ID" value="TraesSTA3B03G01599560.1.CDS1"/>
    <property type="gene ID" value="TraesSTA3B03G01599560"/>
</dbReference>
<dbReference type="EnsemblPlants" id="TraesSYM7B03G04083870.1">
    <property type="protein sequence ID" value="TraesSYM7B03G04083870.1.CDS1"/>
    <property type="gene ID" value="TraesSYM7B03G04083870"/>
</dbReference>
<dbReference type="GeneID" id="803130"/>
<dbReference type="Gramene" id="TraesARI7B03G04256870.1">
    <property type="protein sequence ID" value="TraesARI7B03G04256870.1.CDS1"/>
    <property type="gene ID" value="TraesARI7B03G04256870"/>
</dbReference>
<dbReference type="Gramene" id="TraesCS2D02G079300.1">
    <property type="protein sequence ID" value="TraesCS2D02G079300.1"/>
    <property type="gene ID" value="TraesCS2D02G079300"/>
</dbReference>
<dbReference type="Gramene" id="TraesCS2D02G557200.1">
    <property type="protein sequence ID" value="TraesCS2D02G557200.1.cds1"/>
    <property type="gene ID" value="TraesCS2D02G557200"/>
</dbReference>
<dbReference type="Gramene" id="TraesCS2D03G0156200.1">
    <property type="protein sequence ID" value="TraesCS2D03G0156200.1.CDS"/>
    <property type="gene ID" value="TraesCS2D03G0156200"/>
</dbReference>
<dbReference type="Gramene" id="TraesCS2D03G1241400.1">
    <property type="protein sequence ID" value="TraesCS2D03G1241400.1.CDS1"/>
    <property type="gene ID" value="TraesCS2D03G1241400"/>
</dbReference>
<dbReference type="Gramene" id="TraesJAG1B03G00216680.1">
    <property type="protein sequence ID" value="TraesJAG1B03G00216680.1.CDS1"/>
    <property type="gene ID" value="TraesJAG1B03G00216680"/>
</dbReference>
<dbReference type="Gramene" id="TraesJUL1B03G00215670.1">
    <property type="protein sequence ID" value="TraesJUL1B03G00215670.1.CDS1"/>
    <property type="gene ID" value="TraesJUL1B03G00215670"/>
</dbReference>
<dbReference type="Gramene" id="TraesJUL2D03G01304920.1">
    <property type="protein sequence ID" value="TraesJUL2D03G01304920.1.CDS1"/>
    <property type="gene ID" value="TraesJUL2D03G01304920"/>
</dbReference>
<dbReference type="Gramene" id="TraesKAR1B01G0064330.1">
    <property type="protein sequence ID" value="cds.TraesKAR1B01G0064330.1"/>
    <property type="gene ID" value="TraesKAR1B01G0064330"/>
</dbReference>
<dbReference type="Gramene" id="TraesKAR2D01G0459090.1">
    <property type="protein sequence ID" value="cds.TraesKAR2D01G0459090.1"/>
    <property type="gene ID" value="TraesKAR2D01G0459090"/>
</dbReference>
<dbReference type="Gramene" id="TraesKAR4A01G0000300.1">
    <property type="protein sequence ID" value="cds.TraesKAR4A01G0000300.1"/>
    <property type="gene ID" value="TraesKAR4A01G0000300"/>
</dbReference>
<dbReference type="Gramene" id="TraesKAR6B01G0219100.1">
    <property type="protein sequence ID" value="cds.TraesKAR6B01G0219100.1"/>
    <property type="gene ID" value="TraesKAR6B01G0219100"/>
</dbReference>
<dbReference type="Gramene" id="TraesKAR6B01G0219980.1">
    <property type="protein sequence ID" value="cds.TraesKAR6B01G0219980.1"/>
    <property type="gene ID" value="TraesKAR6B01G0219980"/>
</dbReference>
<dbReference type="Gramene" id="TraesKARUn01G0026300.1">
    <property type="protein sequence ID" value="cds.TraesKARUn01G0026300.1"/>
    <property type="gene ID" value="TraesKARUn01G0026300"/>
</dbReference>
<dbReference type="Gramene" id="TraesKARUn01G0027200.1">
    <property type="protein sequence ID" value="cds.TraesKARUn01G0027200.1"/>
    <property type="gene ID" value="TraesKARUn01G0027200"/>
</dbReference>
<dbReference type="Gramene" id="TraesKARUn01G0028950.1">
    <property type="protein sequence ID" value="cds.TraesKARUn01G0028950.1"/>
    <property type="gene ID" value="TraesKARUn01G0028950"/>
</dbReference>
<dbReference type="Gramene" id="TraesKARUn01G0032570.1">
    <property type="protein sequence ID" value="cds.TraesKARUn01G0032570.1"/>
    <property type="gene ID" value="TraesKARUn01G0032570"/>
</dbReference>
<dbReference type="Gramene" id="TraesKARUn01G0034040.1">
    <property type="protein sequence ID" value="cds.TraesKARUn01G0034040.1"/>
    <property type="gene ID" value="TraesKARUn01G0034040"/>
</dbReference>
<dbReference type="Gramene" id="TraesKARUn01G0035070.1">
    <property type="protein sequence ID" value="cds.TraesKARUn01G0035070.1"/>
    <property type="gene ID" value="TraesKARUn01G0035070"/>
</dbReference>
<dbReference type="Gramene" id="TraesKARUn01G0035620.1">
    <property type="protein sequence ID" value="cds.TraesKARUn01G0035620.1"/>
    <property type="gene ID" value="TraesKARUn01G0035620"/>
</dbReference>
<dbReference type="Gramene" id="TraesKARUn01G0035920.1">
    <property type="protein sequence ID" value="cds.TraesKARUn01G0035920.1"/>
    <property type="gene ID" value="TraesKARUn01G0035920"/>
</dbReference>
<dbReference type="Gramene" id="TraesKARUn01G0036030.1">
    <property type="protein sequence ID" value="cds.TraesKARUn01G0036030.1"/>
    <property type="gene ID" value="TraesKARUn01G0036030"/>
</dbReference>
<dbReference type="Gramene" id="TraesKARUn01G0036160.1">
    <property type="protein sequence ID" value="cds.TraesKARUn01G0036160.1"/>
    <property type="gene ID" value="TraesKARUn01G0036160"/>
</dbReference>
<dbReference type="Gramene" id="TraesKARUn01G0076180.1">
    <property type="protein sequence ID" value="cds.TraesKARUn01G0076180.1"/>
    <property type="gene ID" value="TraesKARUn01G0076180"/>
</dbReference>
<dbReference type="Gramene" id="TraesKARUn01G0076380.1">
    <property type="protein sequence ID" value="cds.TraesKARUn01G0076380.1"/>
    <property type="gene ID" value="TraesKARUn01G0076380"/>
</dbReference>
<dbReference type="Gramene" id="TraesKARUn01G0076590.1">
    <property type="protein sequence ID" value="cds.TraesKARUn01G0076590.1"/>
    <property type="gene ID" value="TraesKARUn01G0076590"/>
</dbReference>
<dbReference type="Gramene" id="TraesKARUn01G0076820.1">
    <property type="protein sequence ID" value="cds.TraesKARUn01G0076820.1"/>
    <property type="gene ID" value="TraesKARUn01G0076820"/>
</dbReference>
<dbReference type="Gramene" id="TraesKARUn01G0101420.1">
    <property type="protein sequence ID" value="cds.TraesKARUn01G0101420.1"/>
    <property type="gene ID" value="TraesKARUn01G0101420"/>
</dbReference>
<dbReference type="Gramene" id="TraesKARUn01G0129100.1">
    <property type="protein sequence ID" value="cds.TraesKARUn01G0129100.1"/>
    <property type="gene ID" value="TraesKARUn01G0129100"/>
</dbReference>
<dbReference type="Gramene" id="TraesKARUn01G0150150.1">
    <property type="protein sequence ID" value="cds.TraesKARUn01G0150150.1"/>
    <property type="gene ID" value="TraesKARUn01G0150150"/>
</dbReference>
<dbReference type="Gramene" id="TraesKARUn01G0150420.1">
    <property type="protein sequence ID" value="cds.TraesKARUn01G0150420.1"/>
    <property type="gene ID" value="TraesKARUn01G0150420"/>
</dbReference>
<dbReference type="Gramene" id="TraesKARUn01G0150780.1">
    <property type="protein sequence ID" value="cds.TraesKARUn01G0150780.1"/>
    <property type="gene ID" value="TraesKARUn01G0150780"/>
</dbReference>
<dbReference type="Gramene" id="TraesKARUn01G0150900.1">
    <property type="protein sequence ID" value="cds.TraesKARUn01G0150900.1"/>
    <property type="gene ID" value="TraesKARUn01G0150900"/>
</dbReference>
<dbReference type="Gramene" id="TraesKARUn01G0154660.1">
    <property type="protein sequence ID" value="cds.TraesKARUn01G0154660.1"/>
    <property type="gene ID" value="TraesKARUn01G0154660"/>
</dbReference>
<dbReference type="Gramene" id="TraesKARUn01G0168460.1">
    <property type="protein sequence ID" value="cds.TraesKARUn01G0168460.1"/>
    <property type="gene ID" value="TraesKARUn01G0168460"/>
</dbReference>
<dbReference type="Gramene" id="TraesKARUn01G0172490.1">
    <property type="protein sequence ID" value="cds.TraesKARUn01G0172490.1"/>
    <property type="gene ID" value="TraesKARUn01G0172490"/>
</dbReference>
<dbReference type="Gramene" id="TraesKARUn01G0178090.1">
    <property type="protein sequence ID" value="cds.TraesKARUn01G0178090.1"/>
    <property type="gene ID" value="TraesKARUn01G0178090"/>
</dbReference>
<dbReference type="Gramene" id="TraesKARUn01G0178160.1">
    <property type="protein sequence ID" value="cds.TraesKARUn01G0178160.1"/>
    <property type="gene ID" value="TraesKARUn01G0178160"/>
</dbReference>
<dbReference type="Gramene" id="TraesKARUn01G0178690.1">
    <property type="protein sequence ID" value="cds.TraesKARUn01G0178690.1"/>
    <property type="gene ID" value="TraesKARUn01G0178690"/>
</dbReference>
<dbReference type="Gramene" id="TraesKARUn01G0185650.1">
    <property type="protein sequence ID" value="cds.TraesKARUn01G0185650.1"/>
    <property type="gene ID" value="TraesKARUn01G0185650"/>
</dbReference>
<dbReference type="Gramene" id="TraesKARUn01G0188070.1">
    <property type="protein sequence ID" value="cds.TraesKARUn01G0188070.1"/>
    <property type="gene ID" value="TraesKARUn01G0188070"/>
</dbReference>
<dbReference type="Gramene" id="TraesKARUn01G0188810.1">
    <property type="protein sequence ID" value="cds.TraesKARUn01G0188810.1"/>
    <property type="gene ID" value="TraesKARUn01G0188810"/>
</dbReference>
<dbReference type="Gramene" id="TraesLAC2D03G01055000.1">
    <property type="protein sequence ID" value="TraesLAC2D03G01055000.1.CDS1"/>
    <property type="gene ID" value="TraesLAC2D03G01055000"/>
</dbReference>
<dbReference type="Gramene" id="TraesLDM2D03G01293920.1">
    <property type="protein sequence ID" value="TraesLDM2D03G01293920.1.CDS1"/>
    <property type="gene ID" value="TraesLDM2D03G01293920"/>
</dbReference>
<dbReference type="Gramene" id="TraesMAC2D03G01291390.1">
    <property type="protein sequence ID" value="TraesMAC2D03G01291390.1.CDS1"/>
    <property type="gene ID" value="TraesMAC2D03G01291390"/>
</dbReference>
<dbReference type="Gramene" id="TraesMAC2D03G01301980.1">
    <property type="protein sequence ID" value="TraesMAC2D03G01301980.1.CDS1"/>
    <property type="gene ID" value="TraesMAC2D03G01301980"/>
</dbReference>
<dbReference type="Gramene" id="TraesPARA_EIv1.0_0758570.1">
    <property type="protein sequence ID" value="TraesPARA_EIv1.0_0758570.1.CDS1"/>
    <property type="gene ID" value="TraesPARA_EIv1.0_0758570"/>
</dbReference>
<dbReference type="Gramene" id="TraesPARA_EIv1.0_2014390.1">
    <property type="protein sequence ID" value="TraesPARA_EIv1.0_2014390.1.CDS1"/>
    <property type="gene ID" value="TraesPARA_EIv1.0_2014390"/>
</dbReference>
<dbReference type="Gramene" id="TraesPARA_EIv1.0_2054710.1">
    <property type="protein sequence ID" value="TraesPARA_EIv1.0_2054710.1.CDS1"/>
    <property type="gene ID" value="TraesPARA_EIv1.0_2054710"/>
</dbReference>
<dbReference type="Gramene" id="TraesPARA_EIv1.0_2055280.1">
    <property type="protein sequence ID" value="TraesPARA_EIv1.0_2055280.1.CDS1"/>
    <property type="gene ID" value="TraesPARA_EIv1.0_2055280"/>
</dbReference>
<dbReference type="Gramene" id="TraesPARA_EIv1.0_2648810.1">
    <property type="protein sequence ID" value="TraesPARA_EIv1.0_2648810.1.CDS1"/>
    <property type="gene ID" value="TraesPARA_EIv1.0_2648810"/>
</dbReference>
<dbReference type="Gramene" id="TraesPARA_EIv1.0_2649280.1">
    <property type="protein sequence ID" value="TraesPARA_EIv1.0_2649280.1.CDS1"/>
    <property type="gene ID" value="TraesPARA_EIv1.0_2649280"/>
</dbReference>
<dbReference type="Gramene" id="TraesPARA_EIv1.0_2650680.1">
    <property type="protein sequence ID" value="TraesPARA_EIv1.0_2650680.1.CDS1"/>
    <property type="gene ID" value="TraesPARA_EIv1.0_2650680"/>
</dbReference>
<dbReference type="Gramene" id="TraesPARA_EIv1.0_2674340.1">
    <property type="protein sequence ID" value="TraesPARA_EIv1.0_2674340.1.CDS1"/>
    <property type="gene ID" value="TraesPARA_EIv1.0_2674340"/>
</dbReference>
<dbReference type="Gramene" id="TraesPARA_EIv1.0_2676400.1">
    <property type="protein sequence ID" value="TraesPARA_EIv1.0_2676400.1.CDS1"/>
    <property type="gene ID" value="TraesPARA_EIv1.0_2676400"/>
</dbReference>
<dbReference type="Gramene" id="TraesPARA_EIv1.0_2677400.1">
    <property type="protein sequence ID" value="TraesPARA_EIv1.0_2677400.1.CDS1"/>
    <property type="gene ID" value="TraesPARA_EIv1.0_2677400"/>
</dbReference>
<dbReference type="Gramene" id="TraesPARA_EIv1.0_2677640.1">
    <property type="protein sequence ID" value="TraesPARA_EIv1.0_2677640.1.CDS1"/>
    <property type="gene ID" value="TraesPARA_EIv1.0_2677640"/>
</dbReference>
<dbReference type="Gramene" id="TraesPARA_EIv1.0_2678830.1">
    <property type="protein sequence ID" value="TraesPARA_EIv1.0_2678830.1.CDS1"/>
    <property type="gene ID" value="TraesPARA_EIv1.0_2678830"/>
</dbReference>
<dbReference type="Gramene" id="TraesPARA_EIv1.0_2679970.1">
    <property type="protein sequence ID" value="TraesPARA_EIv1.0_2679970.1.CDS1"/>
    <property type="gene ID" value="TraesPARA_EIv1.0_2679970"/>
</dbReference>
<dbReference type="Gramene" id="TraesPARA_EIv1.0_2681290.1">
    <property type="protein sequence ID" value="TraesPARA_EIv1.0_2681290.1.CDS1"/>
    <property type="gene ID" value="TraesPARA_EIv1.0_2681290"/>
</dbReference>
<dbReference type="Gramene" id="TraesPARA_EIv1.0_2681380.1">
    <property type="protein sequence ID" value="TraesPARA_EIv1.0_2681380.1.CDS1"/>
    <property type="gene ID" value="TraesPARA_EIv1.0_2681380"/>
</dbReference>
<dbReference type="Gramene" id="TraesRN2D0100173600.1">
    <property type="protein sequence ID" value="TraesRN2D0100173600.1"/>
    <property type="gene ID" value="TraesRN2D0100173600"/>
</dbReference>
<dbReference type="Gramene" id="TraesRN2D0101218100.1">
    <property type="protein sequence ID" value="TraesRN2D0101218100.1"/>
    <property type="gene ID" value="TraesRN2D0101218100"/>
</dbReference>
<dbReference type="Gramene" id="TraesRN3A0101018600.1">
    <property type="protein sequence ID" value="TraesRN3A0101018600.1"/>
    <property type="gene ID" value="TraesRN3A0101018600"/>
</dbReference>
<dbReference type="Gramene" id="TraesRN3B0100445200.1">
    <property type="protein sequence ID" value="TraesRN3B0100445200.1"/>
    <property type="gene ID" value="TraesRN3B0100445200"/>
</dbReference>
<dbReference type="Gramene" id="TraesSTA2D03G01281930.1">
    <property type="protein sequence ID" value="TraesSTA2D03G01281930.1.CDS1"/>
    <property type="gene ID" value="TraesSTA2D03G01281930"/>
</dbReference>
<dbReference type="Gramene" id="TraesSTA3B03G01599560.1">
    <property type="protein sequence ID" value="TraesSTA3B03G01599560.1.CDS1"/>
    <property type="gene ID" value="TraesSTA3B03G01599560"/>
</dbReference>
<dbReference type="Gramene" id="TraesSYM7B03G04083870.1">
    <property type="protein sequence ID" value="TraesSYM7B03G04083870.1.CDS1"/>
    <property type="gene ID" value="TraesSYM7B03G04083870"/>
</dbReference>
<dbReference type="KEGG" id="taes:803130"/>
<dbReference type="eggNOG" id="ENOG502QQHR">
    <property type="taxonomic scope" value="Eukaryota"/>
</dbReference>
<dbReference type="HOGENOM" id="CLU_085957_3_0_1"/>
<dbReference type="OMA" id="TSWYGVI"/>
<dbReference type="OrthoDB" id="655704at2759"/>
<dbReference type="Proteomes" id="UP000019116">
    <property type="component" value="Chloroplast"/>
</dbReference>
<dbReference type="GO" id="GO:0009535">
    <property type="term" value="C:chloroplast thylakoid membrane"/>
    <property type="evidence" value="ECO:0007669"/>
    <property type="project" value="UniProtKB-SubCell"/>
</dbReference>
<dbReference type="GO" id="GO:0008137">
    <property type="term" value="F:NADH dehydrogenase (ubiquinone) activity"/>
    <property type="evidence" value="ECO:0007669"/>
    <property type="project" value="InterPro"/>
</dbReference>
<dbReference type="GO" id="GO:0048038">
    <property type="term" value="F:quinone binding"/>
    <property type="evidence" value="ECO:0007669"/>
    <property type="project" value="UniProtKB-KW"/>
</dbReference>
<dbReference type="FunFam" id="1.20.120.1200:FF:000002">
    <property type="entry name" value="NAD(P)H-quinone oxidoreductase subunit 6, chloroplastic"/>
    <property type="match status" value="1"/>
</dbReference>
<dbReference type="Gene3D" id="1.20.120.1200">
    <property type="entry name" value="NADH-ubiquinone/plastoquinone oxidoreductase chain 6, subunit NuoJ"/>
    <property type="match status" value="1"/>
</dbReference>
<dbReference type="InterPro" id="IPR050290">
    <property type="entry name" value="NAD(P)H-Q_Oxidoreduct_6"/>
</dbReference>
<dbReference type="InterPro" id="IPR001457">
    <property type="entry name" value="NADH_UbQ/plastoQ_OxRdtase_su6"/>
</dbReference>
<dbReference type="InterPro" id="IPR042106">
    <property type="entry name" value="Nuo/plastoQ_OxRdtase_6_NuoJ"/>
</dbReference>
<dbReference type="PANTHER" id="PTHR48479">
    <property type="entry name" value="NAD(P)H-QUINONE OXIDOREDUCTASE SUBUNIT 6, CHLOROPLASTIC"/>
    <property type="match status" value="1"/>
</dbReference>
<dbReference type="PANTHER" id="PTHR48479:SF1">
    <property type="entry name" value="NAD(P)H-QUINONE OXIDOREDUCTASE SUBUNIT 6, CHLOROPLASTIC"/>
    <property type="match status" value="1"/>
</dbReference>
<dbReference type="Pfam" id="PF00499">
    <property type="entry name" value="Oxidored_q3"/>
    <property type="match status" value="1"/>
</dbReference>
<protein>
    <recommendedName>
        <fullName>NAD(P)H-quinone oxidoreductase subunit 6, chloroplastic</fullName>
        <ecNumber>7.1.1.-</ecNumber>
    </recommendedName>
    <alternativeName>
        <fullName>NAD(P)H dehydrogenase subunit 6</fullName>
    </alternativeName>
    <alternativeName>
        <fullName>NADH-plastoquinone oxidoreductase subunit 6</fullName>
    </alternativeName>
</protein>
<accession>Q95H44</accession>
<reference key="1">
    <citation type="journal article" date="2000" name="Plant Mol. Biol. Rep.">
        <title>Chinese spring wheat (Triticum aestivum L.) chloroplast genome: complete sequence and contig clones.</title>
        <authorList>
            <person name="Ogihara Y."/>
            <person name="Isono K."/>
            <person name="Kojima T."/>
            <person name="Endo A."/>
            <person name="Hanaoka M."/>
            <person name="Shiina T."/>
            <person name="Terachi T."/>
            <person name="Utsugi S."/>
            <person name="Murata M."/>
            <person name="Mori N."/>
            <person name="Takumi S."/>
            <person name="Ikeo K."/>
            <person name="Gojobori T."/>
            <person name="Murai R."/>
            <person name="Murai K."/>
            <person name="Matsuoka Y."/>
            <person name="Ohnishi Y."/>
            <person name="Tajiri H."/>
            <person name="Tsunewaki K."/>
        </authorList>
    </citation>
    <scope>NUCLEOTIDE SEQUENCE [LARGE SCALE GENOMIC DNA]</scope>
    <source>
        <strain>cv. Chinese Spring</strain>
    </source>
</reference>
<geneLocation type="chloroplast"/>
<evidence type="ECO:0000250" key="1"/>
<evidence type="ECO:0000255" key="2"/>
<evidence type="ECO:0000305" key="3"/>
<feature type="chain" id="PRO_0000118364" description="NAD(P)H-quinone oxidoreductase subunit 6, chloroplastic">
    <location>
        <begin position="1"/>
        <end position="176"/>
    </location>
</feature>
<feature type="transmembrane region" description="Helical" evidence="2">
    <location>
        <begin position="10"/>
        <end position="30"/>
    </location>
</feature>
<feature type="transmembrane region" description="Helical" evidence="2">
    <location>
        <begin position="33"/>
        <end position="53"/>
    </location>
</feature>
<feature type="transmembrane region" description="Helical" evidence="2">
    <location>
        <begin position="60"/>
        <end position="80"/>
    </location>
</feature>
<feature type="transmembrane region" description="Helical" evidence="2">
    <location>
        <begin position="95"/>
        <end position="115"/>
    </location>
</feature>
<feature type="transmembrane region" description="Helical" evidence="2">
    <location>
        <begin position="152"/>
        <end position="172"/>
    </location>
</feature>
<proteinExistence type="inferred from homology"/>
<comment type="function">
    <text evidence="1">NDH shuttles electrons from NAD(P)H:plastoquinone, via FMN and iron-sulfur (Fe-S) centers, to quinones in the photosynthetic chain and possibly in a chloroplast respiratory chain. The immediate electron acceptor for the enzyme in this species is believed to be plastoquinone. Couples the redox reaction to proton translocation, and thus conserves the redox energy in a proton gradient (By similarity).</text>
</comment>
<comment type="catalytic activity">
    <reaction>
        <text>a plastoquinone + NADH + (n+1) H(+)(in) = a plastoquinol + NAD(+) + n H(+)(out)</text>
        <dbReference type="Rhea" id="RHEA:42608"/>
        <dbReference type="Rhea" id="RHEA-COMP:9561"/>
        <dbReference type="Rhea" id="RHEA-COMP:9562"/>
        <dbReference type="ChEBI" id="CHEBI:15378"/>
        <dbReference type="ChEBI" id="CHEBI:17757"/>
        <dbReference type="ChEBI" id="CHEBI:57540"/>
        <dbReference type="ChEBI" id="CHEBI:57945"/>
        <dbReference type="ChEBI" id="CHEBI:62192"/>
    </reaction>
</comment>
<comment type="catalytic activity">
    <reaction>
        <text>a plastoquinone + NADPH + (n+1) H(+)(in) = a plastoquinol + NADP(+) + n H(+)(out)</text>
        <dbReference type="Rhea" id="RHEA:42612"/>
        <dbReference type="Rhea" id="RHEA-COMP:9561"/>
        <dbReference type="Rhea" id="RHEA-COMP:9562"/>
        <dbReference type="ChEBI" id="CHEBI:15378"/>
        <dbReference type="ChEBI" id="CHEBI:17757"/>
        <dbReference type="ChEBI" id="CHEBI:57783"/>
        <dbReference type="ChEBI" id="CHEBI:58349"/>
        <dbReference type="ChEBI" id="CHEBI:62192"/>
    </reaction>
</comment>
<comment type="subunit">
    <text evidence="1">NDH is composed of at least 16 different subunits, 5 of which are encoded in the nucleus.</text>
</comment>
<comment type="subcellular location">
    <subcellularLocation>
        <location evidence="1">Plastid</location>
        <location evidence="1">Chloroplast thylakoid membrane</location>
        <topology evidence="1">Multi-pass membrane protein</topology>
    </subcellularLocation>
</comment>
<comment type="similarity">
    <text evidence="3">Belongs to the complex I subunit 6 family.</text>
</comment>
<organism>
    <name type="scientific">Triticum aestivum</name>
    <name type="common">Wheat</name>
    <dbReference type="NCBI Taxonomy" id="4565"/>
    <lineage>
        <taxon>Eukaryota</taxon>
        <taxon>Viridiplantae</taxon>
        <taxon>Streptophyta</taxon>
        <taxon>Embryophyta</taxon>
        <taxon>Tracheophyta</taxon>
        <taxon>Spermatophyta</taxon>
        <taxon>Magnoliopsida</taxon>
        <taxon>Liliopsida</taxon>
        <taxon>Poales</taxon>
        <taxon>Poaceae</taxon>
        <taxon>BOP clade</taxon>
        <taxon>Pooideae</taxon>
        <taxon>Triticodae</taxon>
        <taxon>Triticeae</taxon>
        <taxon>Triticinae</taxon>
        <taxon>Triticum</taxon>
    </lineage>
</organism>
<name>NU6C_WHEAT</name>
<gene>
    <name type="primary">ndhG</name>
</gene>